<proteinExistence type="inferred from homology"/>
<organism>
    <name type="scientific">Trichodesmium erythraeum (strain IMS101)</name>
    <dbReference type="NCBI Taxonomy" id="203124"/>
    <lineage>
        <taxon>Bacteria</taxon>
        <taxon>Bacillati</taxon>
        <taxon>Cyanobacteriota</taxon>
        <taxon>Cyanophyceae</taxon>
        <taxon>Oscillatoriophycideae</taxon>
        <taxon>Oscillatoriales</taxon>
        <taxon>Microcoleaceae</taxon>
        <taxon>Trichodesmium</taxon>
    </lineage>
</organism>
<sequence>MTLITICGPTATGKSGLALDLAHRLGSIILSADSRQIYKYFNIGTAKPTIKEQQLVSHYLIDICEPTEILTLAEYQKQAQSFIQSPGSQTDVVLPTLLVGGTGLYIKAIVKGLKIPRVGPNEKLRSQLANLGQKQCYKMLQQVDQVAVEKIHPNDVVRTLRALEVFYVSGKPISQQQGEDLPNYPILQIGLDCDVEVLGERIRDRTEKMVEVGLVEEVKCLCEKYGEKLPLLNTLGYAEMKQYLAGDISLAEAIKATVLHTRQFAKRQRTWFRGYPEIEWFDGNAPNLLDKVWERVREFTRILAEKTQE</sequence>
<reference key="1">
    <citation type="journal article" date="2015" name="Proc. Natl. Acad. Sci. U.S.A.">
        <title>Trichodesmium genome maintains abundant, widespread noncoding DNA in situ, despite oligotrophic lifestyle.</title>
        <authorList>
            <person name="Walworth N."/>
            <person name="Pfreundt U."/>
            <person name="Nelson W.C."/>
            <person name="Mincer T."/>
            <person name="Heidelberg J.F."/>
            <person name="Fu F."/>
            <person name="Waterbury J.B."/>
            <person name="Glavina del Rio T."/>
            <person name="Goodwin L."/>
            <person name="Kyrpides N.C."/>
            <person name="Land M.L."/>
            <person name="Woyke T."/>
            <person name="Hutchins D.A."/>
            <person name="Hess W.R."/>
            <person name="Webb E.A."/>
        </authorList>
    </citation>
    <scope>NUCLEOTIDE SEQUENCE [LARGE SCALE GENOMIC DNA]</scope>
    <source>
        <strain>IMS101</strain>
    </source>
</reference>
<accession>Q10XN7</accession>
<protein>
    <recommendedName>
        <fullName evidence="1">tRNA dimethylallyltransferase</fullName>
        <ecNumber evidence="1">2.5.1.75</ecNumber>
    </recommendedName>
    <alternativeName>
        <fullName evidence="1">Dimethylallyl diphosphate:tRNA dimethylallyltransferase</fullName>
        <shortName evidence="1">DMAPP:tRNA dimethylallyltransferase</shortName>
        <shortName evidence="1">DMATase</shortName>
    </alternativeName>
    <alternativeName>
        <fullName evidence="1">Isopentenyl-diphosphate:tRNA isopentenyltransferase</fullName>
        <shortName evidence="1">IPP transferase</shortName>
        <shortName evidence="1">IPPT</shortName>
        <shortName evidence="1">IPTase</shortName>
    </alternativeName>
</protein>
<evidence type="ECO:0000255" key="1">
    <source>
        <dbReference type="HAMAP-Rule" id="MF_00185"/>
    </source>
</evidence>
<feature type="chain" id="PRO_0000377361" description="tRNA dimethylallyltransferase">
    <location>
        <begin position="1"/>
        <end position="309"/>
    </location>
</feature>
<feature type="region of interest" description="Interaction with substrate tRNA" evidence="1">
    <location>
        <begin position="33"/>
        <end position="36"/>
    </location>
</feature>
<feature type="binding site" evidence="1">
    <location>
        <begin position="8"/>
        <end position="15"/>
    </location>
    <ligand>
        <name>ATP</name>
        <dbReference type="ChEBI" id="CHEBI:30616"/>
    </ligand>
</feature>
<feature type="binding site" evidence="1">
    <location>
        <begin position="10"/>
        <end position="15"/>
    </location>
    <ligand>
        <name>substrate</name>
    </ligand>
</feature>
<feature type="site" description="Interaction with substrate tRNA" evidence="1">
    <location>
        <position position="102"/>
    </location>
</feature>
<gene>
    <name evidence="1" type="primary">miaA</name>
    <name type="ordered locus">Tery_3962</name>
</gene>
<dbReference type="EC" id="2.5.1.75" evidence="1"/>
<dbReference type="EMBL" id="CP000393">
    <property type="protein sequence ID" value="ABG52987.1"/>
    <property type="molecule type" value="Genomic_DNA"/>
</dbReference>
<dbReference type="RefSeq" id="WP_011613317.1">
    <property type="nucleotide sequence ID" value="NC_008312.1"/>
</dbReference>
<dbReference type="SMR" id="Q10XN7"/>
<dbReference type="STRING" id="203124.Tery_3962"/>
<dbReference type="KEGG" id="ter:Tery_3962"/>
<dbReference type="eggNOG" id="COG0324">
    <property type="taxonomic scope" value="Bacteria"/>
</dbReference>
<dbReference type="HOGENOM" id="CLU_032616_0_1_3"/>
<dbReference type="OrthoDB" id="9776390at2"/>
<dbReference type="GO" id="GO:0005524">
    <property type="term" value="F:ATP binding"/>
    <property type="evidence" value="ECO:0007669"/>
    <property type="project" value="UniProtKB-UniRule"/>
</dbReference>
<dbReference type="GO" id="GO:0052381">
    <property type="term" value="F:tRNA dimethylallyltransferase activity"/>
    <property type="evidence" value="ECO:0007669"/>
    <property type="project" value="UniProtKB-UniRule"/>
</dbReference>
<dbReference type="GO" id="GO:0006400">
    <property type="term" value="P:tRNA modification"/>
    <property type="evidence" value="ECO:0007669"/>
    <property type="project" value="TreeGrafter"/>
</dbReference>
<dbReference type="Gene3D" id="1.10.20.140">
    <property type="match status" value="1"/>
</dbReference>
<dbReference type="Gene3D" id="3.40.50.300">
    <property type="entry name" value="P-loop containing nucleotide triphosphate hydrolases"/>
    <property type="match status" value="1"/>
</dbReference>
<dbReference type="HAMAP" id="MF_00185">
    <property type="entry name" value="IPP_trans"/>
    <property type="match status" value="1"/>
</dbReference>
<dbReference type="InterPro" id="IPR039657">
    <property type="entry name" value="Dimethylallyltransferase"/>
</dbReference>
<dbReference type="InterPro" id="IPR018022">
    <property type="entry name" value="IPT"/>
</dbReference>
<dbReference type="InterPro" id="IPR027417">
    <property type="entry name" value="P-loop_NTPase"/>
</dbReference>
<dbReference type="NCBIfam" id="TIGR00174">
    <property type="entry name" value="miaA"/>
    <property type="match status" value="1"/>
</dbReference>
<dbReference type="PANTHER" id="PTHR11088">
    <property type="entry name" value="TRNA DIMETHYLALLYLTRANSFERASE"/>
    <property type="match status" value="1"/>
</dbReference>
<dbReference type="PANTHER" id="PTHR11088:SF60">
    <property type="entry name" value="TRNA DIMETHYLALLYLTRANSFERASE"/>
    <property type="match status" value="1"/>
</dbReference>
<dbReference type="Pfam" id="PF01715">
    <property type="entry name" value="IPPT"/>
    <property type="match status" value="1"/>
</dbReference>
<dbReference type="SUPFAM" id="SSF52540">
    <property type="entry name" value="P-loop containing nucleoside triphosphate hydrolases"/>
    <property type="match status" value="2"/>
</dbReference>
<comment type="function">
    <text evidence="1">Catalyzes the transfer of a dimethylallyl group onto the adenine at position 37 in tRNAs that read codons beginning with uridine, leading to the formation of N6-(dimethylallyl)adenosine (i(6)A).</text>
</comment>
<comment type="catalytic activity">
    <reaction evidence="1">
        <text>adenosine(37) in tRNA + dimethylallyl diphosphate = N(6)-dimethylallyladenosine(37) in tRNA + diphosphate</text>
        <dbReference type="Rhea" id="RHEA:26482"/>
        <dbReference type="Rhea" id="RHEA-COMP:10162"/>
        <dbReference type="Rhea" id="RHEA-COMP:10375"/>
        <dbReference type="ChEBI" id="CHEBI:33019"/>
        <dbReference type="ChEBI" id="CHEBI:57623"/>
        <dbReference type="ChEBI" id="CHEBI:74411"/>
        <dbReference type="ChEBI" id="CHEBI:74415"/>
        <dbReference type="EC" id="2.5.1.75"/>
    </reaction>
</comment>
<comment type="cofactor">
    <cofactor evidence="1">
        <name>Mg(2+)</name>
        <dbReference type="ChEBI" id="CHEBI:18420"/>
    </cofactor>
</comment>
<comment type="subunit">
    <text evidence="1">Monomer.</text>
</comment>
<comment type="similarity">
    <text evidence="1">Belongs to the IPP transferase family.</text>
</comment>
<name>MIAA_TRIEI</name>
<keyword id="KW-0067">ATP-binding</keyword>
<keyword id="KW-0460">Magnesium</keyword>
<keyword id="KW-0547">Nucleotide-binding</keyword>
<keyword id="KW-0808">Transferase</keyword>
<keyword id="KW-0819">tRNA processing</keyword>